<organism>
    <name type="scientific">Thermotoga petrophila (strain ATCC BAA-488 / DSM 13995 / JCM 10881 / RKU-1)</name>
    <dbReference type="NCBI Taxonomy" id="390874"/>
    <lineage>
        <taxon>Bacteria</taxon>
        <taxon>Thermotogati</taxon>
        <taxon>Thermotogota</taxon>
        <taxon>Thermotogae</taxon>
        <taxon>Thermotogales</taxon>
        <taxon>Thermotogaceae</taxon>
        <taxon>Thermotoga</taxon>
    </lineage>
</organism>
<comment type="function">
    <text evidence="1">Endonuclease that is involved in the suppression of homologous recombination and thus may have a key role in the control of bacterial genetic diversity.</text>
</comment>
<comment type="function">
    <text evidence="1">Acts as a ribosome collision sensor, splitting the ribosome into its 2 subunits. Detects stalled/collided 70S ribosomes which it binds and splits by an ATP-hydrolysis driven conformational change. Acts upstream of the ribosome quality control system (RQC), a ribosome-associated complex that mediates the extraction of incompletely synthesized nascent chains from stalled ribosomes and their subsequent degradation. Probably generates substrates for RQC.</text>
</comment>
<comment type="subunit">
    <text evidence="1">Homodimer. Binds to stalled ribosomes, contacting rRNA.</text>
</comment>
<comment type="similarity">
    <text evidence="1">Belongs to the DNA mismatch repair MutS family. MutS2 subfamily.</text>
</comment>
<protein>
    <recommendedName>
        <fullName evidence="1">Endonuclease MutS2</fullName>
        <ecNumber evidence="1">3.1.-.-</ecNumber>
    </recommendedName>
    <alternativeName>
        <fullName evidence="1">Ribosome-associated protein quality control-upstream factor</fullName>
        <shortName evidence="1">RQC-upstream factor</shortName>
        <shortName evidence="1">RqcU</shortName>
        <ecNumber evidence="1">3.6.4.-</ecNumber>
    </alternativeName>
</protein>
<name>MUTS2_THEP1</name>
<feature type="chain" id="PRO_1000075480" description="Endonuclease MutS2">
    <location>
        <begin position="1"/>
        <end position="757"/>
    </location>
</feature>
<feature type="domain" description="Smr" evidence="1">
    <location>
        <begin position="681"/>
        <end position="756"/>
    </location>
</feature>
<feature type="binding site" evidence="1">
    <location>
        <begin position="321"/>
        <end position="328"/>
    </location>
    <ligand>
        <name>ATP</name>
        <dbReference type="ChEBI" id="CHEBI:30616"/>
    </ligand>
</feature>
<gene>
    <name evidence="1" type="primary">mutS2</name>
    <name evidence="1" type="synonym">rqcU</name>
    <name type="ordered locus">Tpet_1493</name>
</gene>
<dbReference type="EC" id="3.1.-.-" evidence="1"/>
<dbReference type="EC" id="3.6.4.-" evidence="1"/>
<dbReference type="EMBL" id="CP000702">
    <property type="protein sequence ID" value="ABQ47501.1"/>
    <property type="molecule type" value="Genomic_DNA"/>
</dbReference>
<dbReference type="RefSeq" id="WP_011943928.1">
    <property type="nucleotide sequence ID" value="NC_009486.1"/>
</dbReference>
<dbReference type="SMR" id="A5IMS8"/>
<dbReference type="STRING" id="390874.Tpet_1493"/>
<dbReference type="KEGG" id="tpt:Tpet_1493"/>
<dbReference type="eggNOG" id="COG1193">
    <property type="taxonomic scope" value="Bacteria"/>
</dbReference>
<dbReference type="HOGENOM" id="CLU_011252_2_1_0"/>
<dbReference type="Proteomes" id="UP000006558">
    <property type="component" value="Chromosome"/>
</dbReference>
<dbReference type="GO" id="GO:0005524">
    <property type="term" value="F:ATP binding"/>
    <property type="evidence" value="ECO:0007669"/>
    <property type="project" value="UniProtKB-UniRule"/>
</dbReference>
<dbReference type="GO" id="GO:0016887">
    <property type="term" value="F:ATP hydrolysis activity"/>
    <property type="evidence" value="ECO:0007669"/>
    <property type="project" value="InterPro"/>
</dbReference>
<dbReference type="GO" id="GO:0140664">
    <property type="term" value="F:ATP-dependent DNA damage sensor activity"/>
    <property type="evidence" value="ECO:0007669"/>
    <property type="project" value="InterPro"/>
</dbReference>
<dbReference type="GO" id="GO:0004519">
    <property type="term" value="F:endonuclease activity"/>
    <property type="evidence" value="ECO:0007669"/>
    <property type="project" value="UniProtKB-UniRule"/>
</dbReference>
<dbReference type="GO" id="GO:0030983">
    <property type="term" value="F:mismatched DNA binding"/>
    <property type="evidence" value="ECO:0007669"/>
    <property type="project" value="InterPro"/>
</dbReference>
<dbReference type="GO" id="GO:0043023">
    <property type="term" value="F:ribosomal large subunit binding"/>
    <property type="evidence" value="ECO:0007669"/>
    <property type="project" value="UniProtKB-UniRule"/>
</dbReference>
<dbReference type="GO" id="GO:0019843">
    <property type="term" value="F:rRNA binding"/>
    <property type="evidence" value="ECO:0007669"/>
    <property type="project" value="UniProtKB-UniRule"/>
</dbReference>
<dbReference type="GO" id="GO:0006298">
    <property type="term" value="P:mismatch repair"/>
    <property type="evidence" value="ECO:0007669"/>
    <property type="project" value="InterPro"/>
</dbReference>
<dbReference type="GO" id="GO:0045910">
    <property type="term" value="P:negative regulation of DNA recombination"/>
    <property type="evidence" value="ECO:0007669"/>
    <property type="project" value="InterPro"/>
</dbReference>
<dbReference type="GO" id="GO:0072344">
    <property type="term" value="P:rescue of stalled ribosome"/>
    <property type="evidence" value="ECO:0007669"/>
    <property type="project" value="UniProtKB-UniRule"/>
</dbReference>
<dbReference type="CDD" id="cd03280">
    <property type="entry name" value="ABC_MutS2"/>
    <property type="match status" value="1"/>
</dbReference>
<dbReference type="FunFam" id="3.40.50.300:FF:000830">
    <property type="entry name" value="Endonuclease MutS2"/>
    <property type="match status" value="1"/>
</dbReference>
<dbReference type="Gene3D" id="1.10.1420.10">
    <property type="match status" value="2"/>
</dbReference>
<dbReference type="Gene3D" id="3.30.1370.110">
    <property type="match status" value="1"/>
</dbReference>
<dbReference type="Gene3D" id="3.40.50.300">
    <property type="entry name" value="P-loop containing nucleotide triphosphate hydrolases"/>
    <property type="match status" value="1"/>
</dbReference>
<dbReference type="HAMAP" id="MF_00092">
    <property type="entry name" value="MutS2"/>
    <property type="match status" value="1"/>
</dbReference>
<dbReference type="InterPro" id="IPR000432">
    <property type="entry name" value="DNA_mismatch_repair_MutS_C"/>
</dbReference>
<dbReference type="InterPro" id="IPR007696">
    <property type="entry name" value="DNA_mismatch_repair_MutS_core"/>
</dbReference>
<dbReference type="InterPro" id="IPR036187">
    <property type="entry name" value="DNA_mismatch_repair_MutS_sf"/>
</dbReference>
<dbReference type="InterPro" id="IPR046893">
    <property type="entry name" value="MSSS"/>
</dbReference>
<dbReference type="InterPro" id="IPR045076">
    <property type="entry name" value="MutS"/>
</dbReference>
<dbReference type="InterPro" id="IPR005747">
    <property type="entry name" value="MutS2"/>
</dbReference>
<dbReference type="InterPro" id="IPR027417">
    <property type="entry name" value="P-loop_NTPase"/>
</dbReference>
<dbReference type="InterPro" id="IPR002625">
    <property type="entry name" value="Smr_dom"/>
</dbReference>
<dbReference type="InterPro" id="IPR036063">
    <property type="entry name" value="Smr_dom_sf"/>
</dbReference>
<dbReference type="NCBIfam" id="TIGR01069">
    <property type="entry name" value="mutS2"/>
    <property type="match status" value="1"/>
</dbReference>
<dbReference type="PANTHER" id="PTHR48466">
    <property type="entry name" value="OS10G0509000 PROTEIN-RELATED"/>
    <property type="match status" value="1"/>
</dbReference>
<dbReference type="PANTHER" id="PTHR48466:SF1">
    <property type="entry name" value="SMR DOMAIN-CONTAINING PROTEIN"/>
    <property type="match status" value="1"/>
</dbReference>
<dbReference type="Pfam" id="PF20297">
    <property type="entry name" value="MSSS"/>
    <property type="match status" value="1"/>
</dbReference>
<dbReference type="Pfam" id="PF00488">
    <property type="entry name" value="MutS_V"/>
    <property type="match status" value="1"/>
</dbReference>
<dbReference type="Pfam" id="PF01713">
    <property type="entry name" value="Smr"/>
    <property type="match status" value="1"/>
</dbReference>
<dbReference type="PIRSF" id="PIRSF005814">
    <property type="entry name" value="MutS_YshD"/>
    <property type="match status" value="1"/>
</dbReference>
<dbReference type="SMART" id="SM00534">
    <property type="entry name" value="MUTSac"/>
    <property type="match status" value="1"/>
</dbReference>
<dbReference type="SMART" id="SM00533">
    <property type="entry name" value="MUTSd"/>
    <property type="match status" value="1"/>
</dbReference>
<dbReference type="SMART" id="SM00463">
    <property type="entry name" value="SMR"/>
    <property type="match status" value="1"/>
</dbReference>
<dbReference type="SUPFAM" id="SSF48334">
    <property type="entry name" value="DNA repair protein MutS, domain III"/>
    <property type="match status" value="1"/>
</dbReference>
<dbReference type="SUPFAM" id="SSF52540">
    <property type="entry name" value="P-loop containing nucleoside triphosphate hydrolases"/>
    <property type="match status" value="1"/>
</dbReference>
<dbReference type="SUPFAM" id="SSF160443">
    <property type="entry name" value="SMR domain-like"/>
    <property type="match status" value="1"/>
</dbReference>
<dbReference type="PROSITE" id="PS00486">
    <property type="entry name" value="DNA_MISMATCH_REPAIR_2"/>
    <property type="match status" value="1"/>
</dbReference>
<dbReference type="PROSITE" id="PS50828">
    <property type="entry name" value="SMR"/>
    <property type="match status" value="1"/>
</dbReference>
<accession>A5IMS8</accession>
<reference key="1">
    <citation type="submission" date="2007-05" db="EMBL/GenBank/DDBJ databases">
        <title>Complete sequence of Thermotoga petrophila RKU-1.</title>
        <authorList>
            <consortium name="US DOE Joint Genome Institute"/>
            <person name="Copeland A."/>
            <person name="Lucas S."/>
            <person name="Lapidus A."/>
            <person name="Barry K."/>
            <person name="Glavina del Rio T."/>
            <person name="Dalin E."/>
            <person name="Tice H."/>
            <person name="Pitluck S."/>
            <person name="Sims D."/>
            <person name="Brettin T."/>
            <person name="Bruce D."/>
            <person name="Detter J.C."/>
            <person name="Han C."/>
            <person name="Tapia R."/>
            <person name="Schmutz J."/>
            <person name="Larimer F."/>
            <person name="Land M."/>
            <person name="Hauser L."/>
            <person name="Kyrpides N."/>
            <person name="Mikhailova N."/>
            <person name="Nelson K."/>
            <person name="Gogarten J.P."/>
            <person name="Noll K."/>
            <person name="Richardson P."/>
        </authorList>
    </citation>
    <scope>NUCLEOTIDE SEQUENCE [LARGE SCALE GENOMIC DNA]</scope>
    <source>
        <strain>ATCC BAA-488 / DSM 13995 / JCM 10881 / RKU-1</strain>
    </source>
</reference>
<sequence>MDYLESLDFPKVVEIVKKYALSDLGRKHLDTLKPTVNPWDELELVEELLNYFARWGEPPIKGLNDISQEVERVKSGSALEPWELLRVSVFLEGCDILKKDFEKREYSRLKETFSRLSSFRDFVEEVNRCIEQDGEISDRASPRLREIRTEKKRLSSEIKRKADDFVRTHSQILQEQMYVYRDGRYLFPVKASMRNAVRGIVHHLSSSGATVFLEPDEFVELNNRVRLLEEEERLEISRILRQLTNILLSRLNDLERNVELIARFDSLYARVKFAREFNGTVVKPSSRIRLVNARHPLIPKERVVPINLELPPNKRGFIITGPNMGGKTVTVKTVGLFTALMMSGFPLPCDEGTELKVFPKIMADIGEEQSIEQSLSTFSSHMKKIVEIVKNADSDSLVILDELGSGTDPVEGAALAVAIIEDLLEKGATIFVTTHLTPVKVFAMNHPLLLNASMEFDPETLSPTYRVLVGVPGGSHAFQIAEKLGLDKRIIENARSRLSREEMELEGLIRSLHEKISLLEEEKRKLQKEREEYMKLREKYEEDYKKLRRMKIEEFDKELRELNDYIRKVKKELDQAIHVAKTGSVDEMREAVKTIEKEKKDLEQKRIEEATEEEIKPGDHVKMEGGTSVGKVVEVKSGTALVDFGFLRLKVPVSKLKKAKKEEKEESSAVSYRPSSFRTEIDIRGMTVEEAEPVVKKFIDDLMMNGISKGYIIHGKGTGKLASGVWEILRKDKRVVSFRFGTPSEGGTGVTVVEVKV</sequence>
<keyword id="KW-0067">ATP-binding</keyword>
<keyword id="KW-0238">DNA-binding</keyword>
<keyword id="KW-0255">Endonuclease</keyword>
<keyword id="KW-0378">Hydrolase</keyword>
<keyword id="KW-0540">Nuclease</keyword>
<keyword id="KW-0547">Nucleotide-binding</keyword>
<keyword id="KW-0694">RNA-binding</keyword>
<keyword id="KW-0699">rRNA-binding</keyword>
<proteinExistence type="inferred from homology"/>
<evidence type="ECO:0000255" key="1">
    <source>
        <dbReference type="HAMAP-Rule" id="MF_00092"/>
    </source>
</evidence>